<sequence length="164" mass="17765">MRLTSKGRYAVTAMLDVALHSQDGPVPLADISERQGISLSYLEQLFSRLRKNGLVASVRGPGGGYLLGKDASAIAVGAVITAVDESVDATRCQGKEGCQGGNRCLTHTLWRDLSERISSFLNNITLAELVNNQDILEVADRQNNDTRRTANGRPQETINVNLRA</sequence>
<name>ISCR_YERPE</name>
<gene>
    <name evidence="1" type="primary">iscR</name>
    <name type="ordered locus">YPO2897</name>
    <name type="ordered locus">y1333</name>
    <name type="ordered locus">YP_2557</name>
</gene>
<proteinExistence type="inferred from homology"/>
<feature type="chain" id="PRO_0000268935" description="HTH-type transcriptional regulator IscR">
    <location>
        <begin position="1"/>
        <end position="164"/>
    </location>
</feature>
<feature type="domain" description="HTH rrf2-type" evidence="1">
    <location>
        <begin position="2"/>
        <end position="131"/>
    </location>
</feature>
<feature type="DNA-binding region" description="H-T-H motif" evidence="1">
    <location>
        <begin position="28"/>
        <end position="51"/>
    </location>
</feature>
<feature type="region of interest" description="Disordered" evidence="2">
    <location>
        <begin position="143"/>
        <end position="164"/>
    </location>
</feature>
<feature type="compositionally biased region" description="Polar residues" evidence="2">
    <location>
        <begin position="152"/>
        <end position="164"/>
    </location>
</feature>
<feature type="binding site" evidence="1">
    <location>
        <position position="92"/>
    </location>
    <ligand>
        <name>[2Fe-2S] cluster</name>
        <dbReference type="ChEBI" id="CHEBI:190135"/>
    </ligand>
</feature>
<feature type="binding site" evidence="1">
    <location>
        <position position="98"/>
    </location>
    <ligand>
        <name>[2Fe-2S] cluster</name>
        <dbReference type="ChEBI" id="CHEBI:190135"/>
    </ligand>
</feature>
<feature type="binding site" evidence="1">
    <location>
        <position position="104"/>
    </location>
    <ligand>
        <name>[2Fe-2S] cluster</name>
        <dbReference type="ChEBI" id="CHEBI:190135"/>
    </ligand>
</feature>
<dbReference type="EMBL" id="AL590842">
    <property type="protein sequence ID" value="CAL21508.1"/>
    <property type="molecule type" value="Genomic_DNA"/>
</dbReference>
<dbReference type="EMBL" id="AE009952">
    <property type="protein sequence ID" value="AAM84906.1"/>
    <property type="status" value="ALT_INIT"/>
    <property type="molecule type" value="Genomic_DNA"/>
</dbReference>
<dbReference type="EMBL" id="AE017042">
    <property type="protein sequence ID" value="AAS62753.1"/>
    <property type="status" value="ALT_INIT"/>
    <property type="molecule type" value="Genomic_DNA"/>
</dbReference>
<dbReference type="PIR" id="AI0352">
    <property type="entry name" value="AI0352"/>
</dbReference>
<dbReference type="RefSeq" id="WP_002222202.1">
    <property type="nucleotide sequence ID" value="NZ_WUCM01000090.1"/>
</dbReference>
<dbReference type="RefSeq" id="YP_002347831.1">
    <property type="nucleotide sequence ID" value="NC_003143.1"/>
</dbReference>
<dbReference type="SMR" id="Q0WD07"/>
<dbReference type="STRING" id="214092.YPO2897"/>
<dbReference type="PaxDb" id="214092-YPO2897"/>
<dbReference type="DNASU" id="1146280"/>
<dbReference type="EnsemblBacteria" id="AAS62753">
    <property type="protein sequence ID" value="AAS62753"/>
    <property type="gene ID" value="YP_2557"/>
</dbReference>
<dbReference type="GeneID" id="96662219"/>
<dbReference type="KEGG" id="ype:YPO2897"/>
<dbReference type="KEGG" id="ypk:y1333"/>
<dbReference type="KEGG" id="ypm:YP_2557"/>
<dbReference type="PATRIC" id="fig|214092.21.peg.3347"/>
<dbReference type="eggNOG" id="COG1959">
    <property type="taxonomic scope" value="Bacteria"/>
</dbReference>
<dbReference type="HOGENOM" id="CLU_107144_0_0_6"/>
<dbReference type="OMA" id="RCMTHDL"/>
<dbReference type="OrthoDB" id="9808360at2"/>
<dbReference type="Proteomes" id="UP000000815">
    <property type="component" value="Chromosome"/>
</dbReference>
<dbReference type="Proteomes" id="UP000001019">
    <property type="component" value="Chromosome"/>
</dbReference>
<dbReference type="Proteomes" id="UP000002490">
    <property type="component" value="Chromosome"/>
</dbReference>
<dbReference type="GO" id="GO:0005829">
    <property type="term" value="C:cytosol"/>
    <property type="evidence" value="ECO:0000318"/>
    <property type="project" value="GO_Central"/>
</dbReference>
<dbReference type="GO" id="GO:0051537">
    <property type="term" value="F:2 iron, 2 sulfur cluster binding"/>
    <property type="evidence" value="ECO:0007669"/>
    <property type="project" value="UniProtKB-KW"/>
</dbReference>
<dbReference type="GO" id="GO:0003700">
    <property type="term" value="F:DNA-binding transcription factor activity"/>
    <property type="evidence" value="ECO:0000318"/>
    <property type="project" value="GO_Central"/>
</dbReference>
<dbReference type="GO" id="GO:0003690">
    <property type="term" value="F:double-stranded DNA binding"/>
    <property type="evidence" value="ECO:0007669"/>
    <property type="project" value="UniProtKB-UniRule"/>
</dbReference>
<dbReference type="GO" id="GO:0005506">
    <property type="term" value="F:iron ion binding"/>
    <property type="evidence" value="ECO:0007669"/>
    <property type="project" value="UniProtKB-UniRule"/>
</dbReference>
<dbReference type="GO" id="GO:0006355">
    <property type="term" value="P:regulation of DNA-templated transcription"/>
    <property type="evidence" value="ECO:0000318"/>
    <property type="project" value="GO_Central"/>
</dbReference>
<dbReference type="FunFam" id="1.10.10.10:FF:000026">
    <property type="entry name" value="HTH-type transcriptional regulator IscR"/>
    <property type="match status" value="1"/>
</dbReference>
<dbReference type="Gene3D" id="1.10.10.10">
    <property type="entry name" value="Winged helix-like DNA-binding domain superfamily/Winged helix DNA-binding domain"/>
    <property type="match status" value="1"/>
</dbReference>
<dbReference type="HAMAP" id="MF_01176">
    <property type="entry name" value="HTH_type_IscR"/>
    <property type="match status" value="1"/>
</dbReference>
<dbReference type="InterPro" id="IPR010242">
    <property type="entry name" value="TF_HTH_IscR"/>
</dbReference>
<dbReference type="InterPro" id="IPR030489">
    <property type="entry name" value="TR_Rrf2-type_CS"/>
</dbReference>
<dbReference type="InterPro" id="IPR000944">
    <property type="entry name" value="Tscrpt_reg_Rrf2"/>
</dbReference>
<dbReference type="InterPro" id="IPR036388">
    <property type="entry name" value="WH-like_DNA-bd_sf"/>
</dbReference>
<dbReference type="InterPro" id="IPR036390">
    <property type="entry name" value="WH_DNA-bd_sf"/>
</dbReference>
<dbReference type="NCBIfam" id="TIGR02010">
    <property type="entry name" value="IscR"/>
    <property type="match status" value="1"/>
</dbReference>
<dbReference type="NCBIfam" id="NF008110">
    <property type="entry name" value="PRK10857.1"/>
    <property type="match status" value="1"/>
</dbReference>
<dbReference type="NCBIfam" id="TIGR00738">
    <property type="entry name" value="rrf2_super"/>
    <property type="match status" value="1"/>
</dbReference>
<dbReference type="PANTHER" id="PTHR33221:SF5">
    <property type="entry name" value="HTH-TYPE TRANSCRIPTIONAL REGULATOR ISCR"/>
    <property type="match status" value="1"/>
</dbReference>
<dbReference type="PANTHER" id="PTHR33221">
    <property type="entry name" value="WINGED HELIX-TURN-HELIX TRANSCRIPTIONAL REGULATOR, RRF2 FAMILY"/>
    <property type="match status" value="1"/>
</dbReference>
<dbReference type="Pfam" id="PF02082">
    <property type="entry name" value="Rrf2"/>
    <property type="match status" value="1"/>
</dbReference>
<dbReference type="SUPFAM" id="SSF46785">
    <property type="entry name" value="Winged helix' DNA-binding domain"/>
    <property type="match status" value="1"/>
</dbReference>
<dbReference type="PROSITE" id="PS01332">
    <property type="entry name" value="HTH_RRF2_1"/>
    <property type="match status" value="1"/>
</dbReference>
<dbReference type="PROSITE" id="PS51197">
    <property type="entry name" value="HTH_RRF2_2"/>
    <property type="match status" value="1"/>
</dbReference>
<reference key="1">
    <citation type="journal article" date="2001" name="Nature">
        <title>Genome sequence of Yersinia pestis, the causative agent of plague.</title>
        <authorList>
            <person name="Parkhill J."/>
            <person name="Wren B.W."/>
            <person name="Thomson N.R."/>
            <person name="Titball R.W."/>
            <person name="Holden M.T.G."/>
            <person name="Prentice M.B."/>
            <person name="Sebaihia M."/>
            <person name="James K.D."/>
            <person name="Churcher C.M."/>
            <person name="Mungall K.L."/>
            <person name="Baker S."/>
            <person name="Basham D."/>
            <person name="Bentley S.D."/>
            <person name="Brooks K."/>
            <person name="Cerdeno-Tarraga A.-M."/>
            <person name="Chillingworth T."/>
            <person name="Cronin A."/>
            <person name="Davies R.M."/>
            <person name="Davis P."/>
            <person name="Dougan G."/>
            <person name="Feltwell T."/>
            <person name="Hamlin N."/>
            <person name="Holroyd S."/>
            <person name="Jagels K."/>
            <person name="Karlyshev A.V."/>
            <person name="Leather S."/>
            <person name="Moule S."/>
            <person name="Oyston P.C.F."/>
            <person name="Quail M.A."/>
            <person name="Rutherford K.M."/>
            <person name="Simmonds M."/>
            <person name="Skelton J."/>
            <person name="Stevens K."/>
            <person name="Whitehead S."/>
            <person name="Barrell B.G."/>
        </authorList>
    </citation>
    <scope>NUCLEOTIDE SEQUENCE [LARGE SCALE GENOMIC DNA]</scope>
    <source>
        <strain>CO-92 / Biovar Orientalis</strain>
    </source>
</reference>
<reference key="2">
    <citation type="journal article" date="2002" name="J. Bacteriol.">
        <title>Genome sequence of Yersinia pestis KIM.</title>
        <authorList>
            <person name="Deng W."/>
            <person name="Burland V."/>
            <person name="Plunkett G. III"/>
            <person name="Boutin A."/>
            <person name="Mayhew G.F."/>
            <person name="Liss P."/>
            <person name="Perna N.T."/>
            <person name="Rose D.J."/>
            <person name="Mau B."/>
            <person name="Zhou S."/>
            <person name="Schwartz D.C."/>
            <person name="Fetherston J.D."/>
            <person name="Lindler L.E."/>
            <person name="Brubaker R.R."/>
            <person name="Plano G.V."/>
            <person name="Straley S.C."/>
            <person name="McDonough K.A."/>
            <person name="Nilles M.L."/>
            <person name="Matson J.S."/>
            <person name="Blattner F.R."/>
            <person name="Perry R.D."/>
        </authorList>
    </citation>
    <scope>NUCLEOTIDE SEQUENCE [LARGE SCALE GENOMIC DNA]</scope>
    <source>
        <strain>KIM10+ / Biovar Mediaevalis</strain>
    </source>
</reference>
<reference key="3">
    <citation type="journal article" date="2004" name="DNA Res.">
        <title>Complete genome sequence of Yersinia pestis strain 91001, an isolate avirulent to humans.</title>
        <authorList>
            <person name="Song Y."/>
            <person name="Tong Z."/>
            <person name="Wang J."/>
            <person name="Wang L."/>
            <person name="Guo Z."/>
            <person name="Han Y."/>
            <person name="Zhang J."/>
            <person name="Pei D."/>
            <person name="Zhou D."/>
            <person name="Qin H."/>
            <person name="Pang X."/>
            <person name="Han Y."/>
            <person name="Zhai J."/>
            <person name="Li M."/>
            <person name="Cui B."/>
            <person name="Qi Z."/>
            <person name="Jin L."/>
            <person name="Dai R."/>
            <person name="Chen F."/>
            <person name="Li S."/>
            <person name="Ye C."/>
            <person name="Du Z."/>
            <person name="Lin W."/>
            <person name="Wang J."/>
            <person name="Yu J."/>
            <person name="Yang H."/>
            <person name="Wang J."/>
            <person name="Huang P."/>
            <person name="Yang R."/>
        </authorList>
    </citation>
    <scope>NUCLEOTIDE SEQUENCE [LARGE SCALE GENOMIC DNA]</scope>
    <source>
        <strain>91001 / Biovar Mediaevalis</strain>
    </source>
</reference>
<accession>Q0WD07</accession>
<accession>Q74SN7</accession>
<accession>Q8D0Z6</accession>
<evidence type="ECO:0000255" key="1">
    <source>
        <dbReference type="HAMAP-Rule" id="MF_01176"/>
    </source>
</evidence>
<evidence type="ECO:0000256" key="2">
    <source>
        <dbReference type="SAM" id="MobiDB-lite"/>
    </source>
</evidence>
<evidence type="ECO:0000305" key="3"/>
<keyword id="KW-0001">2Fe-2S</keyword>
<keyword id="KW-0010">Activator</keyword>
<keyword id="KW-0238">DNA-binding</keyword>
<keyword id="KW-0408">Iron</keyword>
<keyword id="KW-0411">Iron-sulfur</keyword>
<keyword id="KW-0479">Metal-binding</keyword>
<keyword id="KW-1185">Reference proteome</keyword>
<keyword id="KW-0678">Repressor</keyword>
<keyword id="KW-0804">Transcription</keyword>
<keyword id="KW-0805">Transcription regulation</keyword>
<comment type="function">
    <text evidence="1">Regulates the transcription of several operons and genes involved in the biogenesis of Fe-S clusters and Fe-S-containing proteins.</text>
</comment>
<comment type="cofactor">
    <cofactor evidence="1">
        <name>[2Fe-2S] cluster</name>
        <dbReference type="ChEBI" id="CHEBI:190135"/>
    </cofactor>
    <text evidence="1">Binds 1 [2Fe-2S] cluster.</text>
</comment>
<comment type="sequence caution" evidence="3">
    <conflict type="erroneous initiation">
        <sequence resource="EMBL-CDS" id="AAM84906"/>
    </conflict>
</comment>
<comment type="sequence caution" evidence="3">
    <conflict type="erroneous initiation">
        <sequence resource="EMBL-CDS" id="AAS62753"/>
    </conflict>
</comment>
<protein>
    <recommendedName>
        <fullName evidence="1">HTH-type transcriptional regulator IscR</fullName>
    </recommendedName>
</protein>
<organism>
    <name type="scientific">Yersinia pestis</name>
    <dbReference type="NCBI Taxonomy" id="632"/>
    <lineage>
        <taxon>Bacteria</taxon>
        <taxon>Pseudomonadati</taxon>
        <taxon>Pseudomonadota</taxon>
        <taxon>Gammaproteobacteria</taxon>
        <taxon>Enterobacterales</taxon>
        <taxon>Yersiniaceae</taxon>
        <taxon>Yersinia</taxon>
    </lineage>
</organism>